<accession>C3P6V6</accession>
<evidence type="ECO:0000255" key="1">
    <source>
        <dbReference type="HAMAP-Rule" id="MF_01560"/>
    </source>
</evidence>
<organism>
    <name type="scientific">Bacillus anthracis (strain A0248)</name>
    <dbReference type="NCBI Taxonomy" id="592021"/>
    <lineage>
        <taxon>Bacteria</taxon>
        <taxon>Bacillati</taxon>
        <taxon>Bacillota</taxon>
        <taxon>Bacilli</taxon>
        <taxon>Bacillales</taxon>
        <taxon>Bacillaceae</taxon>
        <taxon>Bacillus</taxon>
        <taxon>Bacillus cereus group</taxon>
    </lineage>
</organism>
<reference key="1">
    <citation type="submission" date="2009-04" db="EMBL/GenBank/DDBJ databases">
        <title>Genome sequence of Bacillus anthracis A0248.</title>
        <authorList>
            <person name="Dodson R.J."/>
            <person name="Munk A.C."/>
            <person name="Bruce D."/>
            <person name="Detter C."/>
            <person name="Tapia R."/>
            <person name="Sutton G."/>
            <person name="Sims D."/>
            <person name="Brettin T."/>
        </authorList>
    </citation>
    <scope>NUCLEOTIDE SEQUENCE [LARGE SCALE GENOMIC DNA]</scope>
    <source>
        <strain>A0248</strain>
    </source>
</reference>
<dbReference type="EMBL" id="CP001598">
    <property type="protein sequence ID" value="ACQ49660.1"/>
    <property type="molecule type" value="Genomic_DNA"/>
</dbReference>
<dbReference type="RefSeq" id="WP_000135696.1">
    <property type="nucleotide sequence ID" value="NC_012659.1"/>
</dbReference>
<dbReference type="SMR" id="C3P6V6"/>
<dbReference type="GeneID" id="45023836"/>
<dbReference type="KEGG" id="bai:BAA_4184"/>
<dbReference type="HOGENOM" id="CLU_160493_1_0_9"/>
<dbReference type="Gene3D" id="1.10.287.750">
    <property type="entry name" value="SO2669-like"/>
    <property type="match status" value="1"/>
</dbReference>
<dbReference type="HAMAP" id="MF_01560">
    <property type="entry name" value="UPF0358"/>
    <property type="match status" value="1"/>
</dbReference>
<dbReference type="InterPro" id="IPR009983">
    <property type="entry name" value="UPF0358"/>
</dbReference>
<dbReference type="InterPro" id="IPR036270">
    <property type="entry name" value="UPF0358_sf"/>
</dbReference>
<dbReference type="NCBIfam" id="NF010187">
    <property type="entry name" value="PRK13666.1"/>
    <property type="match status" value="1"/>
</dbReference>
<dbReference type="Pfam" id="PF07408">
    <property type="entry name" value="DUF1507"/>
    <property type="match status" value="1"/>
</dbReference>
<dbReference type="SUPFAM" id="SSF140404">
    <property type="entry name" value="EF2458-like"/>
    <property type="match status" value="1"/>
</dbReference>
<gene>
    <name type="ordered locus">BAA_4184</name>
</gene>
<feature type="chain" id="PRO_1000185422" description="UPF0358 protein BAA_4184">
    <location>
        <begin position="1"/>
        <end position="95"/>
    </location>
</feature>
<comment type="similarity">
    <text evidence="1">Belongs to the UPF0358 family.</text>
</comment>
<sequence length="95" mass="10768">MASETVSNHQEKALALLQADAEKILRLIKVQMDHLTMPQCPLYEEVLDTQMFGLSREVDFAVRLGLIAEEQGKVMLGELERELSALHEAFTNKQQ</sequence>
<proteinExistence type="inferred from homology"/>
<name>Y4184_BACAA</name>
<protein>
    <recommendedName>
        <fullName evidence="1">UPF0358 protein BAA_4184</fullName>
    </recommendedName>
</protein>